<comment type="function">
    <text evidence="1">The RuvA-RuvB-RuvC complex processes Holliday junction (HJ) DNA during genetic recombination and DNA repair, while the RuvA-RuvB complex plays an important role in the rescue of blocked DNA replication forks via replication fork reversal (RFR). RuvA specifically binds to HJ cruciform DNA, conferring on it an open structure. The RuvB hexamer acts as an ATP-dependent pump, pulling dsDNA into and through the RuvAB complex. HJ branch migration allows RuvC to scan DNA until it finds its consensus sequence, where it cleaves and resolves the cruciform DNA.</text>
</comment>
<comment type="subunit">
    <text evidence="1">Homotetramer. Forms an RuvA(8)-RuvB(12)-Holliday junction (HJ) complex. HJ DNA is sandwiched between 2 RuvA tetramers; dsDNA enters through RuvA and exits via RuvB. An RuvB hexamer assembles on each DNA strand where it exits the tetramer. Each RuvB hexamer is contacted by two RuvA subunits (via domain III) on 2 adjacent RuvB subunits; this complex drives branch migration. In the full resolvosome a probable DNA-RuvA(4)-RuvB(12)-RuvC(2) complex forms which resolves the HJ.</text>
</comment>
<comment type="subcellular location">
    <subcellularLocation>
        <location evidence="1">Cytoplasm</location>
    </subcellularLocation>
</comment>
<comment type="domain">
    <text evidence="1">Has three domains with a flexible linker between the domains II and III and assumes an 'L' shape. Domain III is highly mobile and contacts RuvB.</text>
</comment>
<comment type="similarity">
    <text evidence="1">Belongs to the RuvA family.</text>
</comment>
<organism>
    <name type="scientific">Rhodopseudomonas palustris (strain BisB18)</name>
    <dbReference type="NCBI Taxonomy" id="316056"/>
    <lineage>
        <taxon>Bacteria</taxon>
        <taxon>Pseudomonadati</taxon>
        <taxon>Pseudomonadota</taxon>
        <taxon>Alphaproteobacteria</taxon>
        <taxon>Hyphomicrobiales</taxon>
        <taxon>Nitrobacteraceae</taxon>
        <taxon>Rhodopseudomonas</taxon>
    </lineage>
</organism>
<proteinExistence type="inferred from homology"/>
<feature type="chain" id="PRO_1000002529" description="Holliday junction branch migration complex subunit RuvA">
    <location>
        <begin position="1"/>
        <end position="205"/>
    </location>
</feature>
<feature type="region of interest" description="Domain I" evidence="1">
    <location>
        <begin position="1"/>
        <end position="64"/>
    </location>
</feature>
<feature type="region of interest" description="Domain II" evidence="1">
    <location>
        <begin position="65"/>
        <end position="143"/>
    </location>
</feature>
<feature type="region of interest" description="Flexible linker" evidence="1">
    <location>
        <begin position="144"/>
        <end position="153"/>
    </location>
</feature>
<feature type="region of interest" description="Domain III" evidence="1">
    <location>
        <begin position="153"/>
        <end position="205"/>
    </location>
</feature>
<accession>Q20X09</accession>
<keyword id="KW-0963">Cytoplasm</keyword>
<keyword id="KW-0227">DNA damage</keyword>
<keyword id="KW-0233">DNA recombination</keyword>
<keyword id="KW-0234">DNA repair</keyword>
<keyword id="KW-0238">DNA-binding</keyword>
<name>RUVA_RHOPB</name>
<sequence length="205" mass="21381">MIGKLKGLIDSYGEDYVILDVQGVGYQVHCSARTLQALPQAGGAAVLSIETYVREDQIKLFGFRSDLEREWFRLLQTVQGVGAKVALAVLSTLPPADLANAIALRDKAAVARTSGVGPKVAERIVTELKDKAPAFASVDPAVVALSGALDERSAPRPVTDAISALVNLGYGQPQAAAAIASASRSAGEGAETAQLIKLGLKELSK</sequence>
<reference key="1">
    <citation type="submission" date="2006-03" db="EMBL/GenBank/DDBJ databases">
        <title>Complete sequence of Rhodopseudomonas palustris BisB18.</title>
        <authorList>
            <consortium name="US DOE Joint Genome Institute"/>
            <person name="Copeland A."/>
            <person name="Lucas S."/>
            <person name="Lapidus A."/>
            <person name="Barry K."/>
            <person name="Detter J.C."/>
            <person name="Glavina del Rio T."/>
            <person name="Hammon N."/>
            <person name="Israni S."/>
            <person name="Dalin E."/>
            <person name="Tice H."/>
            <person name="Pitluck S."/>
            <person name="Chain P."/>
            <person name="Malfatti S."/>
            <person name="Shin M."/>
            <person name="Vergez L."/>
            <person name="Schmutz J."/>
            <person name="Larimer F."/>
            <person name="Land M."/>
            <person name="Hauser L."/>
            <person name="Pelletier D.A."/>
            <person name="Kyrpides N."/>
            <person name="Anderson I."/>
            <person name="Oda Y."/>
            <person name="Harwood C.S."/>
            <person name="Richardson P."/>
        </authorList>
    </citation>
    <scope>NUCLEOTIDE SEQUENCE [LARGE SCALE GENOMIC DNA]</scope>
    <source>
        <strain>BisB18</strain>
    </source>
</reference>
<protein>
    <recommendedName>
        <fullName evidence="1">Holliday junction branch migration complex subunit RuvA</fullName>
    </recommendedName>
</protein>
<evidence type="ECO:0000255" key="1">
    <source>
        <dbReference type="HAMAP-Rule" id="MF_00031"/>
    </source>
</evidence>
<gene>
    <name evidence="1" type="primary">ruvA</name>
    <name type="ordered locus">RPC_4805</name>
</gene>
<dbReference type="EMBL" id="CP000301">
    <property type="protein sequence ID" value="ABD90327.1"/>
    <property type="molecule type" value="Genomic_DNA"/>
</dbReference>
<dbReference type="SMR" id="Q20X09"/>
<dbReference type="STRING" id="316056.RPC_4805"/>
<dbReference type="KEGG" id="rpc:RPC_4805"/>
<dbReference type="eggNOG" id="COG0632">
    <property type="taxonomic scope" value="Bacteria"/>
</dbReference>
<dbReference type="HOGENOM" id="CLU_087936_3_0_5"/>
<dbReference type="OrthoDB" id="5293449at2"/>
<dbReference type="GO" id="GO:0005737">
    <property type="term" value="C:cytoplasm"/>
    <property type="evidence" value="ECO:0007669"/>
    <property type="project" value="UniProtKB-SubCell"/>
</dbReference>
<dbReference type="GO" id="GO:0009379">
    <property type="term" value="C:Holliday junction helicase complex"/>
    <property type="evidence" value="ECO:0007669"/>
    <property type="project" value="InterPro"/>
</dbReference>
<dbReference type="GO" id="GO:0048476">
    <property type="term" value="C:Holliday junction resolvase complex"/>
    <property type="evidence" value="ECO:0007669"/>
    <property type="project" value="UniProtKB-UniRule"/>
</dbReference>
<dbReference type="GO" id="GO:0005524">
    <property type="term" value="F:ATP binding"/>
    <property type="evidence" value="ECO:0007669"/>
    <property type="project" value="InterPro"/>
</dbReference>
<dbReference type="GO" id="GO:0000400">
    <property type="term" value="F:four-way junction DNA binding"/>
    <property type="evidence" value="ECO:0007669"/>
    <property type="project" value="UniProtKB-UniRule"/>
</dbReference>
<dbReference type="GO" id="GO:0009378">
    <property type="term" value="F:four-way junction helicase activity"/>
    <property type="evidence" value="ECO:0007669"/>
    <property type="project" value="InterPro"/>
</dbReference>
<dbReference type="GO" id="GO:0006310">
    <property type="term" value="P:DNA recombination"/>
    <property type="evidence" value="ECO:0007669"/>
    <property type="project" value="UniProtKB-UniRule"/>
</dbReference>
<dbReference type="GO" id="GO:0006281">
    <property type="term" value="P:DNA repair"/>
    <property type="evidence" value="ECO:0007669"/>
    <property type="project" value="UniProtKB-UniRule"/>
</dbReference>
<dbReference type="Gene3D" id="1.10.150.20">
    <property type="entry name" value="5' to 3' exonuclease, C-terminal subdomain"/>
    <property type="match status" value="1"/>
</dbReference>
<dbReference type="Gene3D" id="1.10.8.10">
    <property type="entry name" value="DNA helicase RuvA subunit, C-terminal domain"/>
    <property type="match status" value="1"/>
</dbReference>
<dbReference type="Gene3D" id="2.40.50.140">
    <property type="entry name" value="Nucleic acid-binding proteins"/>
    <property type="match status" value="1"/>
</dbReference>
<dbReference type="HAMAP" id="MF_00031">
    <property type="entry name" value="DNA_HJ_migration_RuvA"/>
    <property type="match status" value="1"/>
</dbReference>
<dbReference type="InterPro" id="IPR013849">
    <property type="entry name" value="DNA_helicase_Holl-junc_RuvA_I"/>
</dbReference>
<dbReference type="InterPro" id="IPR003583">
    <property type="entry name" value="Hlx-hairpin-Hlx_DNA-bd_motif"/>
</dbReference>
<dbReference type="InterPro" id="IPR012340">
    <property type="entry name" value="NA-bd_OB-fold"/>
</dbReference>
<dbReference type="InterPro" id="IPR000085">
    <property type="entry name" value="RuvA"/>
</dbReference>
<dbReference type="InterPro" id="IPR010994">
    <property type="entry name" value="RuvA_2-like"/>
</dbReference>
<dbReference type="InterPro" id="IPR011114">
    <property type="entry name" value="RuvA_C"/>
</dbReference>
<dbReference type="InterPro" id="IPR036267">
    <property type="entry name" value="RuvA_C_sf"/>
</dbReference>
<dbReference type="NCBIfam" id="TIGR00084">
    <property type="entry name" value="ruvA"/>
    <property type="match status" value="1"/>
</dbReference>
<dbReference type="Pfam" id="PF14520">
    <property type="entry name" value="HHH_5"/>
    <property type="match status" value="1"/>
</dbReference>
<dbReference type="Pfam" id="PF07499">
    <property type="entry name" value="RuvA_C"/>
    <property type="match status" value="1"/>
</dbReference>
<dbReference type="Pfam" id="PF01330">
    <property type="entry name" value="RuvA_N"/>
    <property type="match status" value="1"/>
</dbReference>
<dbReference type="SMART" id="SM00278">
    <property type="entry name" value="HhH1"/>
    <property type="match status" value="2"/>
</dbReference>
<dbReference type="SUPFAM" id="SSF46929">
    <property type="entry name" value="DNA helicase RuvA subunit, C-terminal domain"/>
    <property type="match status" value="1"/>
</dbReference>
<dbReference type="SUPFAM" id="SSF50249">
    <property type="entry name" value="Nucleic acid-binding proteins"/>
    <property type="match status" value="1"/>
</dbReference>
<dbReference type="SUPFAM" id="SSF47781">
    <property type="entry name" value="RuvA domain 2-like"/>
    <property type="match status" value="1"/>
</dbReference>